<comment type="function">
    <text evidence="1">IGPS catalyzes the conversion of PRFAR and glutamine to IGP, AICAR and glutamate. The HisH subunit provides the glutamine amidotransferase activity that produces the ammonia necessary to HisF for the synthesis of IGP and AICAR (By similarity).</text>
</comment>
<comment type="catalytic activity">
    <reaction>
        <text>5-[(5-phospho-1-deoxy-D-ribulos-1-ylimino)methylamino]-1-(5-phospho-beta-D-ribosyl)imidazole-4-carboxamide + L-glutamine = D-erythro-1-(imidazol-4-yl)glycerol 3-phosphate + 5-amino-1-(5-phospho-beta-D-ribosyl)imidazole-4-carboxamide + L-glutamate + H(+)</text>
        <dbReference type="Rhea" id="RHEA:24793"/>
        <dbReference type="ChEBI" id="CHEBI:15378"/>
        <dbReference type="ChEBI" id="CHEBI:29985"/>
        <dbReference type="ChEBI" id="CHEBI:58278"/>
        <dbReference type="ChEBI" id="CHEBI:58359"/>
        <dbReference type="ChEBI" id="CHEBI:58475"/>
        <dbReference type="ChEBI" id="CHEBI:58525"/>
        <dbReference type="EC" id="4.3.2.10"/>
    </reaction>
</comment>
<comment type="catalytic activity">
    <reaction>
        <text>L-glutamine + H2O = L-glutamate + NH4(+)</text>
        <dbReference type="Rhea" id="RHEA:15889"/>
        <dbReference type="ChEBI" id="CHEBI:15377"/>
        <dbReference type="ChEBI" id="CHEBI:28938"/>
        <dbReference type="ChEBI" id="CHEBI:29985"/>
        <dbReference type="ChEBI" id="CHEBI:58359"/>
        <dbReference type="EC" id="3.5.1.2"/>
    </reaction>
</comment>
<comment type="pathway">
    <text>Amino-acid biosynthesis; L-histidine biosynthesis; L-histidine from 5-phospho-alpha-D-ribose 1-diphosphate: step 5/9.</text>
</comment>
<comment type="subunit">
    <text evidence="1">Heterodimer of HisH and HisF.</text>
</comment>
<comment type="subcellular location">
    <subcellularLocation>
        <location evidence="1">Cytoplasm</location>
    </subcellularLocation>
</comment>
<dbReference type="EC" id="4.3.2.10"/>
<dbReference type="EC" id="3.5.1.2"/>
<dbReference type="EMBL" id="BX548175">
    <property type="protein sequence ID" value="CAE20274.1"/>
    <property type="molecule type" value="Genomic_DNA"/>
</dbReference>
<dbReference type="RefSeq" id="WP_011129478.1">
    <property type="nucleotide sequence ID" value="NC_005071.1"/>
</dbReference>
<dbReference type="SMR" id="Q7V959"/>
<dbReference type="KEGG" id="pmt:PMT_0099"/>
<dbReference type="eggNOG" id="COG0118">
    <property type="taxonomic scope" value="Bacteria"/>
</dbReference>
<dbReference type="HOGENOM" id="CLU_071837_2_0_3"/>
<dbReference type="OrthoDB" id="9807137at2"/>
<dbReference type="UniPathway" id="UPA00031">
    <property type="reaction ID" value="UER00010"/>
</dbReference>
<dbReference type="Proteomes" id="UP000001423">
    <property type="component" value="Chromosome"/>
</dbReference>
<dbReference type="GO" id="GO:0005737">
    <property type="term" value="C:cytoplasm"/>
    <property type="evidence" value="ECO:0007669"/>
    <property type="project" value="UniProtKB-SubCell"/>
</dbReference>
<dbReference type="GO" id="GO:0004359">
    <property type="term" value="F:glutaminase activity"/>
    <property type="evidence" value="ECO:0007669"/>
    <property type="project" value="UniProtKB-EC"/>
</dbReference>
<dbReference type="GO" id="GO:0000107">
    <property type="term" value="F:imidazoleglycerol-phosphate synthase activity"/>
    <property type="evidence" value="ECO:0007669"/>
    <property type="project" value="UniProtKB-UniRule"/>
</dbReference>
<dbReference type="GO" id="GO:0016829">
    <property type="term" value="F:lyase activity"/>
    <property type="evidence" value="ECO:0007669"/>
    <property type="project" value="UniProtKB-KW"/>
</dbReference>
<dbReference type="GO" id="GO:0000105">
    <property type="term" value="P:L-histidine biosynthetic process"/>
    <property type="evidence" value="ECO:0007669"/>
    <property type="project" value="UniProtKB-UniRule"/>
</dbReference>
<dbReference type="CDD" id="cd01748">
    <property type="entry name" value="GATase1_IGP_Synthase"/>
    <property type="match status" value="1"/>
</dbReference>
<dbReference type="Gene3D" id="3.40.50.880">
    <property type="match status" value="1"/>
</dbReference>
<dbReference type="HAMAP" id="MF_00278">
    <property type="entry name" value="HisH"/>
    <property type="match status" value="1"/>
</dbReference>
<dbReference type="InterPro" id="IPR029062">
    <property type="entry name" value="Class_I_gatase-like"/>
</dbReference>
<dbReference type="InterPro" id="IPR017926">
    <property type="entry name" value="GATASE"/>
</dbReference>
<dbReference type="InterPro" id="IPR010139">
    <property type="entry name" value="Imidazole-glycPsynth_HisH"/>
</dbReference>
<dbReference type="NCBIfam" id="TIGR01855">
    <property type="entry name" value="IMP_synth_hisH"/>
    <property type="match status" value="1"/>
</dbReference>
<dbReference type="PANTHER" id="PTHR42701">
    <property type="entry name" value="IMIDAZOLE GLYCEROL PHOSPHATE SYNTHASE SUBUNIT HISH"/>
    <property type="match status" value="1"/>
</dbReference>
<dbReference type="PANTHER" id="PTHR42701:SF1">
    <property type="entry name" value="IMIDAZOLE GLYCEROL PHOSPHATE SYNTHASE SUBUNIT HISH"/>
    <property type="match status" value="1"/>
</dbReference>
<dbReference type="Pfam" id="PF00117">
    <property type="entry name" value="GATase"/>
    <property type="match status" value="1"/>
</dbReference>
<dbReference type="PIRSF" id="PIRSF000495">
    <property type="entry name" value="Amidotransf_hisH"/>
    <property type="match status" value="1"/>
</dbReference>
<dbReference type="SUPFAM" id="SSF52317">
    <property type="entry name" value="Class I glutamine amidotransferase-like"/>
    <property type="match status" value="1"/>
</dbReference>
<dbReference type="PROSITE" id="PS51273">
    <property type="entry name" value="GATASE_TYPE_1"/>
    <property type="match status" value="1"/>
</dbReference>
<feature type="chain" id="PRO_0000152405" description="Imidazole glycerol phosphate synthase subunit HisH 1">
    <location>
        <begin position="1"/>
        <end position="216"/>
    </location>
</feature>
<feature type="domain" description="Glutamine amidotransferase type-1">
    <location>
        <begin position="4"/>
        <end position="216"/>
    </location>
</feature>
<feature type="active site" description="Nucleophile" evidence="1">
    <location>
        <position position="84"/>
    </location>
</feature>
<feature type="active site" evidence="1">
    <location>
        <position position="195"/>
    </location>
</feature>
<feature type="active site" evidence="1">
    <location>
        <position position="197"/>
    </location>
</feature>
<sequence>MTACVLIVDAGLGNIGSVVAAYDRLGVRNFRIRKPPSDIACYTHLILPGVGSFSAGMDSLNSLGWSDWLKDVWLPTGRPLLGICLGMQLLASRGFEGSDSGNSIPGLDLISGKIVLMSPSQNLALPHVGWNSVYWSNTITPLSVDINSGCDFYFVHSYTFRCDDDSNCLATSNYGSQFSAVVSDISRNVWGMQFHPEKSQKLGKCLLQNFIALNPC</sequence>
<name>HIS51_PROMM</name>
<gene>
    <name type="primary">hisH1</name>
    <name type="ordered locus">PMT_0099</name>
</gene>
<evidence type="ECO:0000250" key="1"/>
<accession>Q7V959</accession>
<protein>
    <recommendedName>
        <fullName>Imidazole glycerol phosphate synthase subunit HisH 1</fullName>
        <ecNumber>4.3.2.10</ecNumber>
    </recommendedName>
    <alternativeName>
        <fullName>IGP synthase glutaminase subunit 1</fullName>
        <ecNumber>3.5.1.2</ecNumber>
    </alternativeName>
    <alternativeName>
        <fullName>IGP synthase subunit HisH 1</fullName>
    </alternativeName>
    <alternativeName>
        <fullName>ImGP synthase subunit HisH 1</fullName>
        <shortName>IGPS subunit HisH 1</shortName>
    </alternativeName>
</protein>
<proteinExistence type="inferred from homology"/>
<keyword id="KW-0028">Amino-acid biosynthesis</keyword>
<keyword id="KW-0963">Cytoplasm</keyword>
<keyword id="KW-0315">Glutamine amidotransferase</keyword>
<keyword id="KW-0368">Histidine biosynthesis</keyword>
<keyword id="KW-0378">Hydrolase</keyword>
<keyword id="KW-0456">Lyase</keyword>
<keyword id="KW-1185">Reference proteome</keyword>
<reference key="1">
    <citation type="journal article" date="2003" name="Nature">
        <title>Genome divergence in two Prochlorococcus ecotypes reflects oceanic niche differentiation.</title>
        <authorList>
            <person name="Rocap G."/>
            <person name="Larimer F.W."/>
            <person name="Lamerdin J.E."/>
            <person name="Malfatti S."/>
            <person name="Chain P."/>
            <person name="Ahlgren N.A."/>
            <person name="Arellano A."/>
            <person name="Coleman M."/>
            <person name="Hauser L."/>
            <person name="Hess W.R."/>
            <person name="Johnson Z.I."/>
            <person name="Land M.L."/>
            <person name="Lindell D."/>
            <person name="Post A.F."/>
            <person name="Regala W."/>
            <person name="Shah M."/>
            <person name="Shaw S.L."/>
            <person name="Steglich C."/>
            <person name="Sullivan M.B."/>
            <person name="Ting C.S."/>
            <person name="Tolonen A."/>
            <person name="Webb E.A."/>
            <person name="Zinser E.R."/>
            <person name="Chisholm S.W."/>
        </authorList>
    </citation>
    <scope>NUCLEOTIDE SEQUENCE [LARGE SCALE GENOMIC DNA]</scope>
    <source>
        <strain>MIT 9313</strain>
    </source>
</reference>
<organism>
    <name type="scientific">Prochlorococcus marinus (strain MIT 9313)</name>
    <dbReference type="NCBI Taxonomy" id="74547"/>
    <lineage>
        <taxon>Bacteria</taxon>
        <taxon>Bacillati</taxon>
        <taxon>Cyanobacteriota</taxon>
        <taxon>Cyanophyceae</taxon>
        <taxon>Synechococcales</taxon>
        <taxon>Prochlorococcaceae</taxon>
        <taxon>Prochlorococcus</taxon>
    </lineage>
</organism>